<sequence length="576" mass="63823">MLRNTPFGATPTYKLLLGFGLCSLGGAMLYAYFKTRNDEEEADSGGQRPASGIRGQTEEQKPQKEVCLKIVVDNEHVPLIMGRGGSNIKLIEEKTLAKIRLRDKDSGHKFCDISGVPDAVKAARALLIKEIERAPVVKVELQVPQRLASKINGRGGELLQEIRSSSLAKLNIDLNGRNGKAKITIIGNQKQVNIARKMLDDQIEEDEELVRSMEEVEQRREPRRSPTNSIASSMYSSQTSLSSHTQPRDKLMASKGEGKPMEVYVSAVASPTKFWVQLIGPQSKKLDSMVQEMTSYYSSAENRAKHVLTAPYVGQIVAAVFKFDEKWYRAEIVDIMPNQYNPKEQVIDLYFVDYGDSEYISPADICELRTDFLTLRFQAVECFLANVKSTIQTEPITWPKSSIAKFEELTEVAHWRKLIARVVTYKERPRATTAVSAAAKEGTPLPGVELFDPADNSELNIADLMITQGFALPLDDSYPVRSRSSTPSSNSDSTIEELCVSNPVTPLTPHSPMSMSIDVDSITQAENEHLAQQLQHLQHKLNGNDIKNINPAKLTATDLENGNNNNASTTNGASAH</sequence>
<evidence type="ECO:0000255" key="1">
    <source>
        <dbReference type="PROSITE-ProRule" id="PRU00117"/>
    </source>
</evidence>
<evidence type="ECO:0000255" key="2">
    <source>
        <dbReference type="PROSITE-ProRule" id="PRU00211"/>
    </source>
</evidence>
<evidence type="ECO:0000256" key="3">
    <source>
        <dbReference type="SAM" id="MobiDB-lite"/>
    </source>
</evidence>
<evidence type="ECO:0000269" key="4">
    <source>
    </source>
</evidence>
<evidence type="ECO:0000269" key="5">
    <source>
    </source>
</evidence>
<evidence type="ECO:0000303" key="6">
    <source>
    </source>
</evidence>
<evidence type="ECO:0000303" key="7">
    <source>
    </source>
</evidence>
<evidence type="ECO:0000305" key="8"/>
<evidence type="ECO:0000312" key="9">
    <source>
        <dbReference type="FlyBase" id="FBgn0031401"/>
    </source>
</evidence>
<evidence type="ECO:0007744" key="10">
    <source>
        <dbReference type="PDB" id="5YGB"/>
    </source>
</evidence>
<evidence type="ECO:0007744" key="11">
    <source>
        <dbReference type="PDB" id="5YGC"/>
    </source>
</evidence>
<evidence type="ECO:0007744" key="12">
    <source>
        <dbReference type="PDB" id="5YGD"/>
    </source>
</evidence>
<evidence type="ECO:0007744" key="13">
    <source>
        <dbReference type="PDB" id="5YGF"/>
    </source>
</evidence>
<evidence type="ECO:0007829" key="14">
    <source>
        <dbReference type="PDB" id="5YGB"/>
    </source>
</evidence>
<evidence type="ECO:0007829" key="15">
    <source>
        <dbReference type="PDB" id="5YGC"/>
    </source>
</evidence>
<evidence type="ECO:0007829" key="16">
    <source>
        <dbReference type="PDB" id="5YGF"/>
    </source>
</evidence>
<accession>Q9VQ91</accession>
<gene>
    <name evidence="6 9" type="primary">papi</name>
    <name evidence="7" type="synonym">Tdrd2</name>
    <name evidence="9" type="ORF">CG7082</name>
</gene>
<keyword id="KW-0002">3D-structure</keyword>
<keyword id="KW-0963">Cytoplasm</keyword>
<keyword id="KW-0539">Nucleus</keyword>
<keyword id="KW-1185">Reference proteome</keyword>
<organism>
    <name type="scientific">Drosophila melanogaster</name>
    <name type="common">Fruit fly</name>
    <dbReference type="NCBI Taxonomy" id="7227"/>
    <lineage>
        <taxon>Eukaryota</taxon>
        <taxon>Metazoa</taxon>
        <taxon>Ecdysozoa</taxon>
        <taxon>Arthropoda</taxon>
        <taxon>Hexapoda</taxon>
        <taxon>Insecta</taxon>
        <taxon>Pterygota</taxon>
        <taxon>Neoptera</taxon>
        <taxon>Endopterygota</taxon>
        <taxon>Diptera</taxon>
        <taxon>Brachycera</taxon>
        <taxon>Muscomorpha</taxon>
        <taxon>Ephydroidea</taxon>
        <taxon>Drosophilidae</taxon>
        <taxon>Drosophila</taxon>
        <taxon>Sophophora</taxon>
    </lineage>
</organism>
<proteinExistence type="evidence at protein level"/>
<dbReference type="EMBL" id="AE014134">
    <property type="protein sequence ID" value="AAF51286.1"/>
    <property type="molecule type" value="Genomic_DNA"/>
</dbReference>
<dbReference type="EMBL" id="AY058408">
    <property type="protein sequence ID" value="AAL13637.1"/>
    <property type="molecule type" value="mRNA"/>
</dbReference>
<dbReference type="EMBL" id="AE014134">
    <property type="protein sequence ID" value="AAN10448.1"/>
    <property type="molecule type" value="Genomic_DNA"/>
</dbReference>
<dbReference type="EMBL" id="AE014134">
    <property type="protein sequence ID" value="AAN10449.1"/>
    <property type="molecule type" value="Genomic_DNA"/>
</dbReference>
<dbReference type="EMBL" id="AE014134">
    <property type="protein sequence ID" value="AAN10450.1"/>
    <property type="molecule type" value="Genomic_DNA"/>
</dbReference>
<dbReference type="RefSeq" id="NP_608657.1">
    <property type="nucleotide sequence ID" value="NM_134813.3"/>
</dbReference>
<dbReference type="RefSeq" id="NP_722773.1">
    <property type="nucleotide sequence ID" value="NM_164461.2"/>
</dbReference>
<dbReference type="RefSeq" id="NP_722774.1">
    <property type="nucleotide sequence ID" value="NM_164462.2"/>
</dbReference>
<dbReference type="RefSeq" id="NP_722775.1">
    <property type="nucleotide sequence ID" value="NM_164463.2"/>
</dbReference>
<dbReference type="PDB" id="5YGB">
    <property type="method" value="X-ray"/>
    <property type="resolution" value="1.40 A"/>
    <property type="chains" value="A=259-479"/>
</dbReference>
<dbReference type="PDB" id="5YGC">
    <property type="method" value="X-ray"/>
    <property type="resolution" value="2.00 A"/>
    <property type="chains" value="A=259-479"/>
</dbReference>
<dbReference type="PDB" id="5YGD">
    <property type="method" value="X-ray"/>
    <property type="resolution" value="1.55 A"/>
    <property type="chains" value="A=259-479"/>
</dbReference>
<dbReference type="PDB" id="5YGF">
    <property type="method" value="X-ray"/>
    <property type="resolution" value="1.70 A"/>
    <property type="chains" value="A=259-479"/>
</dbReference>
<dbReference type="PDBsum" id="5YGB"/>
<dbReference type="PDBsum" id="5YGC"/>
<dbReference type="PDBsum" id="5YGD"/>
<dbReference type="PDBsum" id="5YGF"/>
<dbReference type="SMR" id="Q9VQ91"/>
<dbReference type="FunCoup" id="Q9VQ91">
    <property type="interactions" value="115"/>
</dbReference>
<dbReference type="IntAct" id="Q9VQ91">
    <property type="interactions" value="10"/>
</dbReference>
<dbReference type="STRING" id="7227.FBpp0077509"/>
<dbReference type="GlyGen" id="Q9VQ91">
    <property type="glycosylation" value="1 site"/>
</dbReference>
<dbReference type="PaxDb" id="7227-FBpp0077508"/>
<dbReference type="DNASU" id="33401"/>
<dbReference type="EnsemblMetazoa" id="FBtr0077836">
    <property type="protein sequence ID" value="FBpp0077508"/>
    <property type="gene ID" value="FBgn0031401"/>
</dbReference>
<dbReference type="EnsemblMetazoa" id="FBtr0077837">
    <property type="protein sequence ID" value="FBpp0077509"/>
    <property type="gene ID" value="FBgn0031401"/>
</dbReference>
<dbReference type="EnsemblMetazoa" id="FBtr0077838">
    <property type="protein sequence ID" value="FBpp0077510"/>
    <property type="gene ID" value="FBgn0031401"/>
</dbReference>
<dbReference type="EnsemblMetazoa" id="FBtr0077839">
    <property type="protein sequence ID" value="FBpp0077511"/>
    <property type="gene ID" value="FBgn0031401"/>
</dbReference>
<dbReference type="GeneID" id="33401"/>
<dbReference type="KEGG" id="dme:Dmel_CG7082"/>
<dbReference type="UCSC" id="CG7082-RA">
    <property type="organism name" value="d. melanogaster"/>
</dbReference>
<dbReference type="AGR" id="FB:FBgn0031401"/>
<dbReference type="CTD" id="33401"/>
<dbReference type="FlyBase" id="FBgn0031401">
    <property type="gene designation" value="papi"/>
</dbReference>
<dbReference type="VEuPathDB" id="VectorBase:FBgn0031401"/>
<dbReference type="eggNOG" id="KOG2279">
    <property type="taxonomic scope" value="Eukaryota"/>
</dbReference>
<dbReference type="GeneTree" id="ENSGT00940000166206"/>
<dbReference type="HOGENOM" id="CLU_023629_0_1_1"/>
<dbReference type="InParanoid" id="Q9VQ91"/>
<dbReference type="OMA" id="NMVQEMT"/>
<dbReference type="OrthoDB" id="9995375at2759"/>
<dbReference type="PhylomeDB" id="Q9VQ91"/>
<dbReference type="BioGRID-ORCS" id="33401">
    <property type="hits" value="0 hits in 1 CRISPR screen"/>
</dbReference>
<dbReference type="GenomeRNAi" id="33401"/>
<dbReference type="PRO" id="PR:Q9VQ91"/>
<dbReference type="Proteomes" id="UP000000803">
    <property type="component" value="Chromosome 2L"/>
</dbReference>
<dbReference type="Bgee" id="FBgn0031401">
    <property type="expression patterns" value="Expressed in crop (Drosophila) and 154 other cell types or tissues"/>
</dbReference>
<dbReference type="GO" id="GO:0005739">
    <property type="term" value="C:mitochondrion"/>
    <property type="evidence" value="ECO:0000314"/>
    <property type="project" value="FlyBase"/>
</dbReference>
<dbReference type="GO" id="GO:0005634">
    <property type="term" value="C:nucleus"/>
    <property type="evidence" value="ECO:0007669"/>
    <property type="project" value="UniProtKB-SubCell"/>
</dbReference>
<dbReference type="GO" id="GO:0043186">
    <property type="term" value="C:P granule"/>
    <property type="evidence" value="ECO:0000314"/>
    <property type="project" value="FlyBase"/>
</dbReference>
<dbReference type="GO" id="GO:0032991">
    <property type="term" value="C:protein-containing complex"/>
    <property type="evidence" value="ECO:0000314"/>
    <property type="project" value="UniProtKB"/>
</dbReference>
<dbReference type="GO" id="GO:0003723">
    <property type="term" value="F:RNA binding"/>
    <property type="evidence" value="ECO:0007669"/>
    <property type="project" value="InterPro"/>
</dbReference>
<dbReference type="GO" id="GO:0030719">
    <property type="term" value="P:P granule organization"/>
    <property type="evidence" value="ECO:0000318"/>
    <property type="project" value="GO_Central"/>
</dbReference>
<dbReference type="GO" id="GO:0034587">
    <property type="term" value="P:piRNA processing"/>
    <property type="evidence" value="ECO:0000315"/>
    <property type="project" value="UniProtKB"/>
</dbReference>
<dbReference type="GO" id="GO:0140990">
    <property type="term" value="P:primary piRNA processing"/>
    <property type="evidence" value="ECO:0000353"/>
    <property type="project" value="FlyBase"/>
</dbReference>
<dbReference type="GO" id="GO:0007283">
    <property type="term" value="P:spermatogenesis"/>
    <property type="evidence" value="ECO:0000318"/>
    <property type="project" value="GO_Central"/>
</dbReference>
<dbReference type="GO" id="GO:0010526">
    <property type="term" value="P:transposable element silencing"/>
    <property type="evidence" value="ECO:0000315"/>
    <property type="project" value="UniProtKB"/>
</dbReference>
<dbReference type="CDD" id="cd00105">
    <property type="entry name" value="KH-I"/>
    <property type="match status" value="1"/>
</dbReference>
<dbReference type="CDD" id="cd20412">
    <property type="entry name" value="Tudor_TDRD2"/>
    <property type="match status" value="1"/>
</dbReference>
<dbReference type="FunFam" id="2.30.30.140:FF:000084">
    <property type="entry name" value="Tudor and KH domain-containing protein"/>
    <property type="match status" value="1"/>
</dbReference>
<dbReference type="Gene3D" id="2.30.30.140">
    <property type="match status" value="1"/>
</dbReference>
<dbReference type="Gene3D" id="2.40.50.90">
    <property type="match status" value="1"/>
</dbReference>
<dbReference type="Gene3D" id="3.30.1370.10">
    <property type="entry name" value="K Homology domain, type 1"/>
    <property type="match status" value="2"/>
</dbReference>
<dbReference type="InterPro" id="IPR004087">
    <property type="entry name" value="KH_dom"/>
</dbReference>
<dbReference type="InterPro" id="IPR004088">
    <property type="entry name" value="KH_dom_type_1"/>
</dbReference>
<dbReference type="InterPro" id="IPR036612">
    <property type="entry name" value="KH_dom_type_1_sf"/>
</dbReference>
<dbReference type="InterPro" id="IPR035437">
    <property type="entry name" value="SNase_OB-fold_sf"/>
</dbReference>
<dbReference type="InterPro" id="IPR047380">
    <property type="entry name" value="TDRD2-like_tudor"/>
</dbReference>
<dbReference type="InterPro" id="IPR002999">
    <property type="entry name" value="Tudor"/>
</dbReference>
<dbReference type="InterPro" id="IPR050621">
    <property type="entry name" value="Tudor_domain_containing"/>
</dbReference>
<dbReference type="PANTHER" id="PTHR22948:SF29">
    <property type="entry name" value="FI02030P-RELATED"/>
    <property type="match status" value="1"/>
</dbReference>
<dbReference type="PANTHER" id="PTHR22948">
    <property type="entry name" value="TUDOR DOMAIN CONTAINING PROTEIN"/>
    <property type="match status" value="1"/>
</dbReference>
<dbReference type="Pfam" id="PF00013">
    <property type="entry name" value="KH_1"/>
    <property type="match status" value="2"/>
</dbReference>
<dbReference type="Pfam" id="PF00567">
    <property type="entry name" value="TUDOR"/>
    <property type="match status" value="1"/>
</dbReference>
<dbReference type="SMART" id="SM00322">
    <property type="entry name" value="KH"/>
    <property type="match status" value="2"/>
</dbReference>
<dbReference type="SMART" id="SM00333">
    <property type="entry name" value="TUDOR"/>
    <property type="match status" value="1"/>
</dbReference>
<dbReference type="SUPFAM" id="SSF54791">
    <property type="entry name" value="Eukaryotic type KH-domain (KH-domain type I)"/>
    <property type="match status" value="2"/>
</dbReference>
<dbReference type="SUPFAM" id="SSF63748">
    <property type="entry name" value="Tudor/PWWP/MBT"/>
    <property type="match status" value="1"/>
</dbReference>
<dbReference type="PROSITE" id="PS50084">
    <property type="entry name" value="KH_TYPE_1"/>
    <property type="match status" value="2"/>
</dbReference>
<dbReference type="PROSITE" id="PS50304">
    <property type="entry name" value="TUDOR"/>
    <property type="match status" value="1"/>
</dbReference>
<protein>
    <recommendedName>
        <fullName evidence="8">Tudor and KH domain-containing protein homolog</fullName>
    </recommendedName>
    <alternativeName>
        <fullName evidence="6">Partner of PIWIs protein</fullName>
    </alternativeName>
</protein>
<reference key="1">
    <citation type="journal article" date="2000" name="Science">
        <title>The genome sequence of Drosophila melanogaster.</title>
        <authorList>
            <person name="Adams M.D."/>
            <person name="Celniker S.E."/>
            <person name="Holt R.A."/>
            <person name="Evans C.A."/>
            <person name="Gocayne J.D."/>
            <person name="Amanatides P.G."/>
            <person name="Scherer S.E."/>
            <person name="Li P.W."/>
            <person name="Hoskins R.A."/>
            <person name="Galle R.F."/>
            <person name="George R.A."/>
            <person name="Lewis S.E."/>
            <person name="Richards S."/>
            <person name="Ashburner M."/>
            <person name="Henderson S.N."/>
            <person name="Sutton G.G."/>
            <person name="Wortman J.R."/>
            <person name="Yandell M.D."/>
            <person name="Zhang Q."/>
            <person name="Chen L.X."/>
            <person name="Brandon R.C."/>
            <person name="Rogers Y.-H.C."/>
            <person name="Blazej R.G."/>
            <person name="Champe M."/>
            <person name="Pfeiffer B.D."/>
            <person name="Wan K.H."/>
            <person name="Doyle C."/>
            <person name="Baxter E.G."/>
            <person name="Helt G."/>
            <person name="Nelson C.R."/>
            <person name="Miklos G.L.G."/>
            <person name="Abril J.F."/>
            <person name="Agbayani A."/>
            <person name="An H.-J."/>
            <person name="Andrews-Pfannkoch C."/>
            <person name="Baldwin D."/>
            <person name="Ballew R.M."/>
            <person name="Basu A."/>
            <person name="Baxendale J."/>
            <person name="Bayraktaroglu L."/>
            <person name="Beasley E.M."/>
            <person name="Beeson K.Y."/>
            <person name="Benos P.V."/>
            <person name="Berman B.P."/>
            <person name="Bhandari D."/>
            <person name="Bolshakov S."/>
            <person name="Borkova D."/>
            <person name="Botchan M.R."/>
            <person name="Bouck J."/>
            <person name="Brokstein P."/>
            <person name="Brottier P."/>
            <person name="Burtis K.C."/>
            <person name="Busam D.A."/>
            <person name="Butler H."/>
            <person name="Cadieu E."/>
            <person name="Center A."/>
            <person name="Chandra I."/>
            <person name="Cherry J.M."/>
            <person name="Cawley S."/>
            <person name="Dahlke C."/>
            <person name="Davenport L.B."/>
            <person name="Davies P."/>
            <person name="de Pablos B."/>
            <person name="Delcher A."/>
            <person name="Deng Z."/>
            <person name="Mays A.D."/>
            <person name="Dew I."/>
            <person name="Dietz S.M."/>
            <person name="Dodson K."/>
            <person name="Doup L.E."/>
            <person name="Downes M."/>
            <person name="Dugan-Rocha S."/>
            <person name="Dunkov B.C."/>
            <person name="Dunn P."/>
            <person name="Durbin K.J."/>
            <person name="Evangelista C.C."/>
            <person name="Ferraz C."/>
            <person name="Ferriera S."/>
            <person name="Fleischmann W."/>
            <person name="Fosler C."/>
            <person name="Gabrielian A.E."/>
            <person name="Garg N.S."/>
            <person name="Gelbart W.M."/>
            <person name="Glasser K."/>
            <person name="Glodek A."/>
            <person name="Gong F."/>
            <person name="Gorrell J.H."/>
            <person name="Gu Z."/>
            <person name="Guan P."/>
            <person name="Harris M."/>
            <person name="Harris N.L."/>
            <person name="Harvey D.A."/>
            <person name="Heiman T.J."/>
            <person name="Hernandez J.R."/>
            <person name="Houck J."/>
            <person name="Hostin D."/>
            <person name="Houston K.A."/>
            <person name="Howland T.J."/>
            <person name="Wei M.-H."/>
            <person name="Ibegwam C."/>
            <person name="Jalali M."/>
            <person name="Kalush F."/>
            <person name="Karpen G.H."/>
            <person name="Ke Z."/>
            <person name="Kennison J.A."/>
            <person name="Ketchum K.A."/>
            <person name="Kimmel B.E."/>
            <person name="Kodira C.D."/>
            <person name="Kraft C.L."/>
            <person name="Kravitz S."/>
            <person name="Kulp D."/>
            <person name="Lai Z."/>
            <person name="Lasko P."/>
            <person name="Lei Y."/>
            <person name="Levitsky A.A."/>
            <person name="Li J.H."/>
            <person name="Li Z."/>
            <person name="Liang Y."/>
            <person name="Lin X."/>
            <person name="Liu X."/>
            <person name="Mattei B."/>
            <person name="McIntosh T.C."/>
            <person name="McLeod M.P."/>
            <person name="McPherson D."/>
            <person name="Merkulov G."/>
            <person name="Milshina N.V."/>
            <person name="Mobarry C."/>
            <person name="Morris J."/>
            <person name="Moshrefi A."/>
            <person name="Mount S.M."/>
            <person name="Moy M."/>
            <person name="Murphy B."/>
            <person name="Murphy L."/>
            <person name="Muzny D.M."/>
            <person name="Nelson D.L."/>
            <person name="Nelson D.R."/>
            <person name="Nelson K.A."/>
            <person name="Nixon K."/>
            <person name="Nusskern D.R."/>
            <person name="Pacleb J.M."/>
            <person name="Palazzolo M."/>
            <person name="Pittman G.S."/>
            <person name="Pan S."/>
            <person name="Pollard J."/>
            <person name="Puri V."/>
            <person name="Reese M.G."/>
            <person name="Reinert K."/>
            <person name="Remington K."/>
            <person name="Saunders R.D.C."/>
            <person name="Scheeler F."/>
            <person name="Shen H."/>
            <person name="Shue B.C."/>
            <person name="Siden-Kiamos I."/>
            <person name="Simpson M."/>
            <person name="Skupski M.P."/>
            <person name="Smith T.J."/>
            <person name="Spier E."/>
            <person name="Spradling A.C."/>
            <person name="Stapleton M."/>
            <person name="Strong R."/>
            <person name="Sun E."/>
            <person name="Svirskas R."/>
            <person name="Tector C."/>
            <person name="Turner R."/>
            <person name="Venter E."/>
            <person name="Wang A.H."/>
            <person name="Wang X."/>
            <person name="Wang Z.-Y."/>
            <person name="Wassarman D.A."/>
            <person name="Weinstock G.M."/>
            <person name="Weissenbach J."/>
            <person name="Williams S.M."/>
            <person name="Woodage T."/>
            <person name="Worley K.C."/>
            <person name="Wu D."/>
            <person name="Yang S."/>
            <person name="Yao Q.A."/>
            <person name="Ye J."/>
            <person name="Yeh R.-F."/>
            <person name="Zaveri J.S."/>
            <person name="Zhan M."/>
            <person name="Zhang G."/>
            <person name="Zhao Q."/>
            <person name="Zheng L."/>
            <person name="Zheng X.H."/>
            <person name="Zhong F.N."/>
            <person name="Zhong W."/>
            <person name="Zhou X."/>
            <person name="Zhu S.C."/>
            <person name="Zhu X."/>
            <person name="Smith H.O."/>
            <person name="Gibbs R.A."/>
            <person name="Myers E.W."/>
            <person name="Rubin G.M."/>
            <person name="Venter J.C."/>
        </authorList>
    </citation>
    <scope>NUCLEOTIDE SEQUENCE [LARGE SCALE GENOMIC DNA]</scope>
    <source>
        <strain>Berkeley</strain>
    </source>
</reference>
<reference key="2">
    <citation type="journal article" date="2002" name="Genome Biol.">
        <title>Annotation of the Drosophila melanogaster euchromatic genome: a systematic review.</title>
        <authorList>
            <person name="Misra S."/>
            <person name="Crosby M.A."/>
            <person name="Mungall C.J."/>
            <person name="Matthews B.B."/>
            <person name="Campbell K.S."/>
            <person name="Hradecky P."/>
            <person name="Huang Y."/>
            <person name="Kaminker J.S."/>
            <person name="Millburn G.H."/>
            <person name="Prochnik S.E."/>
            <person name="Smith C.D."/>
            <person name="Tupy J.L."/>
            <person name="Whitfield E.J."/>
            <person name="Bayraktaroglu L."/>
            <person name="Berman B.P."/>
            <person name="Bettencourt B.R."/>
            <person name="Celniker S.E."/>
            <person name="de Grey A.D.N.J."/>
            <person name="Drysdale R.A."/>
            <person name="Harris N.L."/>
            <person name="Richter J."/>
            <person name="Russo S."/>
            <person name="Schroeder A.J."/>
            <person name="Shu S.Q."/>
            <person name="Stapleton M."/>
            <person name="Yamada C."/>
            <person name="Ashburner M."/>
            <person name="Gelbart W.M."/>
            <person name="Rubin G.M."/>
            <person name="Lewis S.E."/>
        </authorList>
    </citation>
    <scope>GENOME REANNOTATION</scope>
    <source>
        <strain>Berkeley</strain>
    </source>
</reference>
<reference key="3">
    <citation type="journal article" date="2002" name="Genome Biol.">
        <title>A Drosophila full-length cDNA resource.</title>
        <authorList>
            <person name="Stapleton M."/>
            <person name="Carlson J.W."/>
            <person name="Brokstein P."/>
            <person name="Yu C."/>
            <person name="Champe M."/>
            <person name="George R.A."/>
            <person name="Guarin H."/>
            <person name="Kronmiller B."/>
            <person name="Pacleb J.M."/>
            <person name="Park S."/>
            <person name="Wan K.H."/>
            <person name="Rubin G.M."/>
            <person name="Celniker S.E."/>
        </authorList>
    </citation>
    <scope>NUCLEOTIDE SEQUENCE [LARGE SCALE MRNA]</scope>
    <source>
        <strain>Berkeley</strain>
        <tissue>Head</tissue>
    </source>
</reference>
<reference key="4">
    <citation type="journal article" date="2011" name="Development">
        <title>PAPI, a novel TUDOR-domain protein, complexes with AGO3, ME31B and TRAL in the nuage to silence transposition.</title>
        <authorList>
            <person name="Liu L."/>
            <person name="Qi H."/>
            <person name="Wang J."/>
            <person name="Lin H."/>
        </authorList>
    </citation>
    <scope>FUNCTION</scope>
    <scope>INTERACTION WITH AGO3; PIWI; TRAL AND ME31B</scope>
    <scope>SUBCELLULAR LOCATION</scope>
    <scope>TISSUE SPECIFICITY</scope>
    <scope>DEVELOPMENTAL STAGE</scope>
    <scope>DOMAIN</scope>
    <scope>DISRUPTION PHENOTYPE</scope>
</reference>
<reference evidence="10 11 12 13" key="5">
    <citation type="journal article" date="2018" name="Proc. Natl. Acad. Sci. U.S.A.">
        <title>Structural insights into the sequence-specific recognition of Piwi by Drosophila Papi.</title>
        <authorList>
            <person name="Zhang Y.H."/>
            <person name="Liu W.W."/>
            <person name="Li R.H."/>
            <person name="Gu J.Q."/>
            <person name="Wu P."/>
            <person name="Peng C."/>
            <person name="Ma J.B."/>
            <person name="Wu L.G."/>
            <person name="Yu Y."/>
            <person name="Huang Y."/>
        </authorList>
    </citation>
    <scope>X-RAY CRYSTALLOGRAPHY (1.40 ANGSTROMS) OF 259-479</scope>
    <scope>FUNCTION</scope>
    <scope>INTERACTION WITH PIWI</scope>
    <scope>DOMAIN</scope>
    <scope>MUTAGENESIS OF ASP-287; PHE-323; TYR-328; ASP-348; TYR-354; ASP-356; GLU-358; TYR-359 AND GLU-407</scope>
</reference>
<name>TDRKH_DROME</name>
<comment type="function">
    <text evidence="4 5">Involved in the piwi-interacting RNA (piRNA) metabolic process, which mediates the repression of transposable elements during meiosis by forming complexes composed of piRNAs and Piwi proteins, and governs the methylation and subsequent repression of transposons which is essential for germline integrity (PubMed:21447556, PubMed:29531043). Likely to act by recruiting Piwi proteins such as AGO3 and piwi to the piRNA biogenesis machinery in the nuage (PubMed:21447556, PubMed:29531043). Required for the final steps of primary piRNA biogenesis by participating in the 3' end-trimming of piwi-bound intermediates into mature piRNAs (PubMed:29531043).</text>
</comment>
<comment type="subunit">
    <text evidence="4 5">Interacts (via C-terminus) with AGO3 (via the N-terminal region when symmetrically methylated on arginine residues); this interaction is RNA-independent and may be required for AGO3 localization to the nuage (PubMed:21447556). Interacts (via Tudor domain) with piwi (via N-terminus) (PubMed:21447556, PubMed:29531043). Interacts with tral and me31B (PubMed:21447556).</text>
</comment>
<comment type="interaction">
    <interactant intactId="EBI-6915287">
        <id>Q9VQ91</id>
    </interactant>
    <interactant intactId="EBI-3431981">
        <id>Q7PLK0</id>
        <label>AGO3</label>
    </interactant>
    <organismsDiffer>false</organismsDiffer>
    <experiments>6</experiments>
</comment>
<comment type="interaction">
    <interactant intactId="EBI-6915287">
        <id>Q9VQ91</id>
    </interactant>
    <interactant intactId="EBI-3406276">
        <id>Q9VKM1</id>
        <label>piwi</label>
    </interactant>
    <organismsDiffer>false</organismsDiffer>
    <experiments>3</experiments>
</comment>
<comment type="subcellular location">
    <subcellularLocation>
        <location evidence="4">Cytoplasm</location>
    </subcellularLocation>
    <subcellularLocation>
        <location evidence="4">Nucleus</location>
    </subcellularLocation>
    <subcellularLocation>
        <location evidence="4">Cytoplasm</location>
        <location evidence="4">Cytoplasmic ribonucleoprotein granule</location>
    </subcellularLocation>
    <text evidence="4">Component of the perinuclear meiotic nuage (also known as germline granule or P granule), a germline-specific membraneless ribonucleoprotein biocondensate involved in post-transcriptional regulation of transposons and mRNAs (PubMed:21447556). Expressed in the cytoplasm of germline stem cells, cyst cells, nurse cells and oocytes, with strong accumulation in region IIb germline cysts in the germarium (PubMed:21447556). In post-germarium egg chambers accumulates in the perinuclear loci that appear to be the nuage (PubMed:21447556).</text>
</comment>
<comment type="tissue specificity">
    <text evidence="4">Ovaries (at protein level). Expressed in the ovary and testis.</text>
</comment>
<comment type="developmental stage">
    <text evidence="4">Embryo (at protein level) (PubMed:21447556). Expressed throughout development with highest levels of expression in 3rd-instar larvae and adults (PubMed:21447556). Expressed throughout the whole early embryo including the pole cells (PubMed:21447556).</text>
</comment>
<comment type="domain">
    <text evidence="4 5">The Tudor domain is sufficient for binding to the N-terminus (1-14) of both unmethylated piwi or piwi symmetrically dimethylated at 'Arg-10' (PubMed:29531043). However, it may not be sufficient for binding to symmetrically dimethylated AGO3, instead this interaction may require a larger region of the C-terminus which includes the Tudor domain (257-576) (PubMed:21447556, PubMed:29531043).</text>
</comment>
<comment type="disruption phenotype">
    <text evidence="4">RNAi-mediated knockdown does not produce a visible phenotype. However, fertility is reduced with egg-laying decreased by 30%. AGO3 protein levels are decreased and AGO3 is delocalized from the nuage. No effect on nuage morphology and no mislocalization of piwi and aub. RNAi-mediated knockdown in germline tissues results in delocalization of AGO3 from the nuage.</text>
</comment>
<comment type="similarity">
    <text evidence="8">Belongs to the Tdrkh family.</text>
</comment>
<feature type="chain" id="PRO_0000445617" description="Tudor and KH domain-containing protein homolog">
    <location>
        <begin position="1"/>
        <end position="576"/>
    </location>
</feature>
<feature type="domain" description="KH 1" evidence="1">
    <location>
        <begin position="65"/>
        <end position="127"/>
    </location>
</feature>
<feature type="domain" description="KH 2" evidence="1">
    <location>
        <begin position="136"/>
        <end position="199"/>
    </location>
</feature>
<feature type="domain" description="Tudor" evidence="2">
    <location>
        <begin position="310"/>
        <end position="375"/>
    </location>
</feature>
<feature type="region of interest" description="Disordered" evidence="3">
    <location>
        <begin position="40"/>
        <end position="60"/>
    </location>
</feature>
<feature type="region of interest" description="Disordered" evidence="3">
    <location>
        <begin position="209"/>
        <end position="253"/>
    </location>
</feature>
<feature type="region of interest" description="Disordered" evidence="3">
    <location>
        <begin position="556"/>
        <end position="576"/>
    </location>
</feature>
<feature type="compositionally biased region" description="Basic and acidic residues" evidence="3">
    <location>
        <begin position="209"/>
        <end position="224"/>
    </location>
</feature>
<feature type="compositionally biased region" description="Low complexity" evidence="3">
    <location>
        <begin position="232"/>
        <end position="243"/>
    </location>
</feature>
<feature type="compositionally biased region" description="Low complexity" evidence="3">
    <location>
        <begin position="561"/>
        <end position="576"/>
    </location>
</feature>
<feature type="mutagenesis site" description="No effect on binding to piwi." evidence="5">
    <original>D</original>
    <variation>A</variation>
    <location>
        <position position="287"/>
    </location>
</feature>
<feature type="mutagenesis site" description="Decreased binding to piwi." evidence="5">
    <original>F</original>
    <variation>A</variation>
    <location>
        <position position="323"/>
    </location>
</feature>
<feature type="mutagenesis site" description="Significant decrease in binding to unmethylated piwi." evidence="5">
    <original>Y</original>
    <variation>A</variation>
    <location>
        <position position="328"/>
    </location>
</feature>
<feature type="mutagenesis site" description="Unable to rescue fertility and transposon activation defects in mutants. Abolishes binding to piwi; when associated with R-348." evidence="5">
    <original>Y</original>
    <variation>A</variation>
    <location>
        <position position="328"/>
    </location>
</feature>
<feature type="mutagenesis site" description="Decreased binding to piwi and unable to rescue fertility and transposon activation defects in mutants. Abolishes binding to piwi; when associated with A-328." evidence="5">
    <original>D</original>
    <variation>R</variation>
    <location>
        <position position="348"/>
    </location>
</feature>
<feature type="mutagenesis site" description="Decreased binding to unmethylated piwi." evidence="5">
    <original>Y</original>
    <variation>A</variation>
    <location>
        <position position="354"/>
    </location>
</feature>
<feature type="mutagenesis site" description="Decreased binding to unmethylated piwi." evidence="5">
    <original>D</original>
    <variation>A</variation>
    <location>
        <position position="356"/>
    </location>
</feature>
<feature type="mutagenesis site" description="Decreased binding to piwi." evidence="5">
    <original>E</original>
    <variation>A</variation>
    <location>
        <position position="358"/>
    </location>
</feature>
<feature type="mutagenesis site" description="Decreased binding to unmethylated piwi." evidence="5">
    <original>Y</original>
    <variation>A</variation>
    <location>
        <position position="359"/>
    </location>
</feature>
<feature type="mutagenesis site" description="Decreased binding to piwi." evidence="5">
    <original>Y</original>
    <variation>R</variation>
    <location>
        <position position="359"/>
    </location>
</feature>
<feature type="mutagenesis site" description="Decreased binding to piwi." evidence="5">
    <original>E</original>
    <variation>A</variation>
    <location>
        <position position="407"/>
    </location>
</feature>
<feature type="strand" evidence="14">
    <location>
        <begin position="261"/>
        <end position="270"/>
    </location>
</feature>
<feature type="strand" evidence="14">
    <location>
        <begin position="273"/>
        <end position="278"/>
    </location>
</feature>
<feature type="helix" evidence="14">
    <location>
        <begin position="281"/>
        <end position="297"/>
    </location>
</feature>
<feature type="helix" evidence="14">
    <location>
        <begin position="300"/>
        <end position="304"/>
    </location>
</feature>
<feature type="strand" evidence="14">
    <location>
        <begin position="316"/>
        <end position="320"/>
    </location>
</feature>
<feature type="turn" evidence="14">
    <location>
        <begin position="322"/>
        <end position="324"/>
    </location>
</feature>
<feature type="strand" evidence="14">
    <location>
        <begin position="327"/>
        <end position="337"/>
    </location>
</feature>
<feature type="strand" evidence="14">
    <location>
        <begin position="344"/>
        <end position="351"/>
    </location>
</feature>
<feature type="turn" evidence="14">
    <location>
        <begin position="352"/>
        <end position="354"/>
    </location>
</feature>
<feature type="strand" evidence="14">
    <location>
        <begin position="357"/>
        <end position="360"/>
    </location>
</feature>
<feature type="helix" evidence="14">
    <location>
        <begin position="362"/>
        <end position="364"/>
    </location>
</feature>
<feature type="strand" evidence="14">
    <location>
        <begin position="365"/>
        <end position="367"/>
    </location>
</feature>
<feature type="helix" evidence="14">
    <location>
        <begin position="370"/>
        <end position="373"/>
    </location>
</feature>
<feature type="strand" evidence="14">
    <location>
        <begin position="380"/>
        <end position="384"/>
    </location>
</feature>
<feature type="strand" evidence="15">
    <location>
        <begin position="393"/>
        <end position="395"/>
    </location>
</feature>
<feature type="helix" evidence="14">
    <location>
        <begin position="400"/>
        <end position="410"/>
    </location>
</feature>
<feature type="turn" evidence="14">
    <location>
        <begin position="411"/>
        <end position="413"/>
    </location>
</feature>
<feature type="strand" evidence="14">
    <location>
        <begin position="418"/>
        <end position="427"/>
    </location>
</feature>
<feature type="helix" evidence="16">
    <location>
        <begin position="438"/>
        <end position="440"/>
    </location>
</feature>
<feature type="strand" evidence="14">
    <location>
        <begin position="443"/>
        <end position="451"/>
    </location>
</feature>
<feature type="helix" evidence="14">
    <location>
        <begin position="461"/>
        <end position="467"/>
    </location>
</feature>